<evidence type="ECO:0000250" key="1"/>
<evidence type="ECO:0000255" key="2">
    <source>
        <dbReference type="PROSITE-ProRule" id="PRU01210"/>
    </source>
</evidence>
<evidence type="ECO:0000305" key="3"/>
<comment type="function">
    <text evidence="1">Alpha toxins bind voltage-independently at site-3 of sodium channels (Nav) and inhibit the inactivation of the activated channels, thereby blocking neuronal transmission (By similarity). Has paralytic activity in mice.</text>
</comment>
<comment type="subcellular location">
    <subcellularLocation>
        <location>Secreted</location>
    </subcellularLocation>
</comment>
<comment type="tissue specificity">
    <text>Expressed by the venom gland.</text>
</comment>
<comment type="domain">
    <text evidence="3">Has the structural arrangement of an alpha-helix connected to antiparallel beta-sheets by disulfide bonds (CS-alpha/beta).</text>
</comment>
<comment type="similarity">
    <text evidence="3">Belongs to the long (4 C-C) scorpion toxin superfamily. Sodium channel inhibitor family. Alpha subfamily.</text>
</comment>
<accession>P09982</accession>
<sequence length="66" mass="7453">ARDAYIADDRNCVYTCALNPYCDSECKKNGADGSYCQWLGRFGNACWCKNLPDDVPIRKIPGEECR</sequence>
<name>SCXE_MESEU</name>
<feature type="chain" id="PRO_0000066731" description="Toxin BeM14">
    <location>
        <begin position="1"/>
        <end position="66"/>
    </location>
</feature>
<feature type="domain" description="LCN-type CS-alpha/beta" evidence="2">
    <location>
        <begin position="2"/>
        <end position="66"/>
    </location>
</feature>
<feature type="disulfide bond" evidence="2">
    <location>
        <begin position="12"/>
        <end position="65"/>
    </location>
</feature>
<feature type="disulfide bond" evidence="2">
    <location>
        <begin position="16"/>
        <end position="36"/>
    </location>
</feature>
<feature type="disulfide bond" evidence="2">
    <location>
        <begin position="22"/>
        <end position="46"/>
    </location>
</feature>
<feature type="disulfide bond" evidence="2">
    <location>
        <begin position="26"/>
        <end position="48"/>
    </location>
</feature>
<keyword id="KW-0903">Direct protein sequencing</keyword>
<keyword id="KW-1015">Disulfide bond</keyword>
<keyword id="KW-0872">Ion channel impairing toxin</keyword>
<keyword id="KW-0528">Neurotoxin</keyword>
<keyword id="KW-0964">Secreted</keyword>
<keyword id="KW-0800">Toxin</keyword>
<keyword id="KW-0738">Voltage-gated sodium channel impairing toxin</keyword>
<protein>
    <recommendedName>
        <fullName>Toxin BeM14</fullName>
    </recommendedName>
    <alternativeName>
        <fullName>Neurotoxin M14</fullName>
    </alternativeName>
</protein>
<dbReference type="PIR" id="JT0020">
    <property type="entry name" value="NTSR4E"/>
</dbReference>
<dbReference type="SMR" id="P09982"/>
<dbReference type="GO" id="GO:0005576">
    <property type="term" value="C:extracellular region"/>
    <property type="evidence" value="ECO:0007669"/>
    <property type="project" value="UniProtKB-SubCell"/>
</dbReference>
<dbReference type="GO" id="GO:0019871">
    <property type="term" value="F:sodium channel inhibitor activity"/>
    <property type="evidence" value="ECO:0007669"/>
    <property type="project" value="InterPro"/>
</dbReference>
<dbReference type="GO" id="GO:0090729">
    <property type="term" value="F:toxin activity"/>
    <property type="evidence" value="ECO:0007669"/>
    <property type="project" value="UniProtKB-KW"/>
</dbReference>
<dbReference type="GO" id="GO:0006952">
    <property type="term" value="P:defense response"/>
    <property type="evidence" value="ECO:0007669"/>
    <property type="project" value="InterPro"/>
</dbReference>
<dbReference type="CDD" id="cd23106">
    <property type="entry name" value="neurotoxins_LC_scorpion"/>
    <property type="match status" value="1"/>
</dbReference>
<dbReference type="FunFam" id="3.30.30.10:FF:000002">
    <property type="entry name" value="Alpha-like toxin BmK-M1"/>
    <property type="match status" value="1"/>
</dbReference>
<dbReference type="Gene3D" id="3.30.30.10">
    <property type="entry name" value="Knottin, scorpion toxin-like"/>
    <property type="match status" value="1"/>
</dbReference>
<dbReference type="InterPro" id="IPR044062">
    <property type="entry name" value="LCN-type_CS_alpha_beta_dom"/>
</dbReference>
<dbReference type="InterPro" id="IPR003614">
    <property type="entry name" value="Scorpion_toxin-like"/>
</dbReference>
<dbReference type="InterPro" id="IPR036574">
    <property type="entry name" value="Scorpion_toxin-like_sf"/>
</dbReference>
<dbReference type="InterPro" id="IPR018218">
    <property type="entry name" value="Scorpion_toxinL"/>
</dbReference>
<dbReference type="InterPro" id="IPR002061">
    <property type="entry name" value="Scorpion_toxinL/defensin"/>
</dbReference>
<dbReference type="Pfam" id="PF00537">
    <property type="entry name" value="Toxin_3"/>
    <property type="match status" value="1"/>
</dbReference>
<dbReference type="PRINTS" id="PR00285">
    <property type="entry name" value="SCORPNTOXIN"/>
</dbReference>
<dbReference type="SMART" id="SM00505">
    <property type="entry name" value="Knot1"/>
    <property type="match status" value="1"/>
</dbReference>
<dbReference type="SUPFAM" id="SSF57095">
    <property type="entry name" value="Scorpion toxin-like"/>
    <property type="match status" value="1"/>
</dbReference>
<dbReference type="PROSITE" id="PS51863">
    <property type="entry name" value="LCN_CSAB"/>
    <property type="match status" value="1"/>
</dbReference>
<reference key="1">
    <citation type="journal article" date="1984" name="Bioorg. Khim.">
        <title>Amino acid sequence of 2 neurotoxins from the scorpion Buthus eupeus venom.</title>
        <authorList>
            <person name="Volkova T.M."/>
            <person name="Garsia A.F."/>
            <person name="Telezhinskaya I.N."/>
            <person name="Potapenko N.A."/>
            <person name="Grishin E.V."/>
        </authorList>
    </citation>
    <scope>PROTEIN SEQUENCE</scope>
    <source>
        <tissue>Venom</tissue>
    </source>
</reference>
<reference key="2">
    <citation type="journal article" date="1985" name="Bioorg. Khim.">
        <title>Neurotoxins from the venom of the Central Asian scorpion Buthus eupeus.</title>
        <authorList>
            <person name="Volkova T.M."/>
            <person name="Garsia A.F."/>
            <person name="Telezhinskaia I.N."/>
            <person name="Potapenko N.A."/>
            <person name="Grishin E.V."/>
        </authorList>
    </citation>
    <scope>PROTEIN SEQUENCE</scope>
    <source>
        <tissue>Venom</tissue>
    </source>
</reference>
<proteinExistence type="evidence at protein level"/>
<organism>
    <name type="scientific">Mesobuthus eupeus</name>
    <name type="common">Lesser Asian scorpion</name>
    <name type="synonym">Buthus eupeus</name>
    <dbReference type="NCBI Taxonomy" id="34648"/>
    <lineage>
        <taxon>Eukaryota</taxon>
        <taxon>Metazoa</taxon>
        <taxon>Ecdysozoa</taxon>
        <taxon>Arthropoda</taxon>
        <taxon>Chelicerata</taxon>
        <taxon>Arachnida</taxon>
        <taxon>Scorpiones</taxon>
        <taxon>Buthida</taxon>
        <taxon>Buthoidea</taxon>
        <taxon>Buthidae</taxon>
        <taxon>Mesobuthus</taxon>
    </lineage>
</organism>